<keyword id="KW-0012">Acyltransferase</keyword>
<keyword id="KW-0133">Cell shape</keyword>
<keyword id="KW-0961">Cell wall biogenesis/degradation</keyword>
<keyword id="KW-0963">Cytoplasm</keyword>
<keyword id="KW-0460">Magnesium</keyword>
<keyword id="KW-0479">Metal-binding</keyword>
<keyword id="KW-0511">Multifunctional enzyme</keyword>
<keyword id="KW-0548">Nucleotidyltransferase</keyword>
<keyword id="KW-0573">Peptidoglycan synthesis</keyword>
<keyword id="KW-1185">Reference proteome</keyword>
<keyword id="KW-0677">Repeat</keyword>
<keyword id="KW-0808">Transferase</keyword>
<comment type="function">
    <text evidence="1">Catalyzes the last two sequential reactions in the de novo biosynthetic pathway for UDP-N-acetylglucosamine (UDP-GlcNAc). The C-terminal domain catalyzes the transfer of acetyl group from acetyl coenzyme A to glucosamine-1-phosphate (GlcN-1-P) to produce N-acetylglucosamine-1-phosphate (GlcNAc-1-P), which is converted into UDP-GlcNAc by the transfer of uridine 5-monophosphate (from uridine 5-triphosphate), a reaction catalyzed by the N-terminal domain.</text>
</comment>
<comment type="catalytic activity">
    <reaction evidence="1">
        <text>alpha-D-glucosamine 1-phosphate + acetyl-CoA = N-acetyl-alpha-D-glucosamine 1-phosphate + CoA + H(+)</text>
        <dbReference type="Rhea" id="RHEA:13725"/>
        <dbReference type="ChEBI" id="CHEBI:15378"/>
        <dbReference type="ChEBI" id="CHEBI:57287"/>
        <dbReference type="ChEBI" id="CHEBI:57288"/>
        <dbReference type="ChEBI" id="CHEBI:57776"/>
        <dbReference type="ChEBI" id="CHEBI:58516"/>
        <dbReference type="EC" id="2.3.1.157"/>
    </reaction>
</comment>
<comment type="catalytic activity">
    <reaction evidence="1">
        <text>N-acetyl-alpha-D-glucosamine 1-phosphate + UTP + H(+) = UDP-N-acetyl-alpha-D-glucosamine + diphosphate</text>
        <dbReference type="Rhea" id="RHEA:13509"/>
        <dbReference type="ChEBI" id="CHEBI:15378"/>
        <dbReference type="ChEBI" id="CHEBI:33019"/>
        <dbReference type="ChEBI" id="CHEBI:46398"/>
        <dbReference type="ChEBI" id="CHEBI:57705"/>
        <dbReference type="ChEBI" id="CHEBI:57776"/>
        <dbReference type="EC" id="2.7.7.23"/>
    </reaction>
</comment>
<comment type="cofactor">
    <cofactor evidence="1">
        <name>Mg(2+)</name>
        <dbReference type="ChEBI" id="CHEBI:18420"/>
    </cofactor>
    <text evidence="1">Binds 1 Mg(2+) ion per subunit.</text>
</comment>
<comment type="pathway">
    <text evidence="1">Nucleotide-sugar biosynthesis; UDP-N-acetyl-alpha-D-glucosamine biosynthesis; N-acetyl-alpha-D-glucosamine 1-phosphate from alpha-D-glucosamine 6-phosphate (route II): step 2/2.</text>
</comment>
<comment type="pathway">
    <text evidence="1">Nucleotide-sugar biosynthesis; UDP-N-acetyl-alpha-D-glucosamine biosynthesis; UDP-N-acetyl-alpha-D-glucosamine from N-acetyl-alpha-D-glucosamine 1-phosphate: step 1/1.</text>
</comment>
<comment type="pathway">
    <text evidence="1">Bacterial outer membrane biogenesis; LPS lipid A biosynthesis.</text>
</comment>
<comment type="subunit">
    <text evidence="1">Homotrimer.</text>
</comment>
<comment type="subcellular location">
    <subcellularLocation>
        <location evidence="1">Cytoplasm</location>
    </subcellularLocation>
</comment>
<comment type="similarity">
    <text evidence="1">In the N-terminal section; belongs to the N-acetylglucosamine-1-phosphate uridyltransferase family.</text>
</comment>
<comment type="similarity">
    <text evidence="1">In the C-terminal section; belongs to the transferase hexapeptide repeat family.</text>
</comment>
<gene>
    <name evidence="1" type="primary">glmU</name>
    <name type="ordered locus">BQ2027_MB1046C</name>
</gene>
<protein>
    <recommendedName>
        <fullName evidence="1">Bifunctional protein GlmU</fullName>
    </recommendedName>
    <domain>
        <recommendedName>
            <fullName evidence="1">UDP-N-acetylglucosamine pyrophosphorylase</fullName>
            <ecNumber evidence="1">2.7.7.23</ecNumber>
        </recommendedName>
        <alternativeName>
            <fullName evidence="1">N-acetylglucosamine-1-phosphate uridyltransferase</fullName>
        </alternativeName>
    </domain>
    <domain>
        <recommendedName>
            <fullName evidence="1">Glucosamine-1-phosphate N-acetyltransferase</fullName>
            <ecNumber evidence="1">2.3.1.157</ecNumber>
        </recommendedName>
    </domain>
</protein>
<name>GLMU_MYCBO</name>
<organism>
    <name type="scientific">Mycobacterium bovis (strain ATCC BAA-935 / AF2122/97)</name>
    <dbReference type="NCBI Taxonomy" id="233413"/>
    <lineage>
        <taxon>Bacteria</taxon>
        <taxon>Bacillati</taxon>
        <taxon>Actinomycetota</taxon>
        <taxon>Actinomycetes</taxon>
        <taxon>Mycobacteriales</taxon>
        <taxon>Mycobacteriaceae</taxon>
        <taxon>Mycobacterium</taxon>
        <taxon>Mycobacterium tuberculosis complex</taxon>
    </lineage>
</organism>
<feature type="chain" id="PRO_0000233799" description="Bifunctional protein GlmU">
    <location>
        <begin position="1"/>
        <end position="495"/>
    </location>
</feature>
<feature type="region of interest" description="Pyrophosphorylase" evidence="1">
    <location>
        <begin position="1"/>
        <end position="241"/>
    </location>
</feature>
<feature type="region of interest" description="Linker" evidence="1">
    <location>
        <begin position="242"/>
        <end position="262"/>
    </location>
</feature>
<feature type="region of interest" description="N-acetyltransferase" evidence="1">
    <location>
        <begin position="263"/>
        <end position="495"/>
    </location>
</feature>
<feature type="region of interest" description="Disordered" evidence="2">
    <location>
        <begin position="457"/>
        <end position="495"/>
    </location>
</feature>
<feature type="compositionally biased region" description="Low complexity" evidence="2">
    <location>
        <begin position="483"/>
        <end position="495"/>
    </location>
</feature>
<feature type="active site" description="Proton acceptor" evidence="1">
    <location>
        <position position="374"/>
    </location>
</feature>
<feature type="binding site" evidence="1">
    <location>
        <begin position="12"/>
        <end position="15"/>
    </location>
    <ligand>
        <name>UDP-N-acetyl-alpha-D-glucosamine</name>
        <dbReference type="ChEBI" id="CHEBI:57705"/>
    </ligand>
</feature>
<feature type="binding site" evidence="1">
    <location>
        <position position="26"/>
    </location>
    <ligand>
        <name>UDP-N-acetyl-alpha-D-glucosamine</name>
        <dbReference type="ChEBI" id="CHEBI:57705"/>
    </ligand>
</feature>
<feature type="binding site" evidence="1">
    <location>
        <position position="83"/>
    </location>
    <ligand>
        <name>UDP-N-acetyl-alpha-D-glucosamine</name>
        <dbReference type="ChEBI" id="CHEBI:57705"/>
    </ligand>
</feature>
<feature type="binding site" evidence="1">
    <location>
        <begin position="88"/>
        <end position="89"/>
    </location>
    <ligand>
        <name>UDP-N-acetyl-alpha-D-glucosamine</name>
        <dbReference type="ChEBI" id="CHEBI:57705"/>
    </ligand>
</feature>
<feature type="binding site" evidence="1">
    <location>
        <begin position="112"/>
        <end position="114"/>
    </location>
    <ligand>
        <name>UDP-N-acetyl-alpha-D-glucosamine</name>
        <dbReference type="ChEBI" id="CHEBI:57705"/>
    </ligand>
</feature>
<feature type="binding site" evidence="1">
    <location>
        <position position="114"/>
    </location>
    <ligand>
        <name>Mg(2+)</name>
        <dbReference type="ChEBI" id="CHEBI:18420"/>
    </ligand>
</feature>
<feature type="binding site" evidence="1">
    <location>
        <position position="151"/>
    </location>
    <ligand>
        <name>UDP-N-acetyl-alpha-D-glucosamine</name>
        <dbReference type="ChEBI" id="CHEBI:57705"/>
    </ligand>
</feature>
<feature type="binding site" evidence="1">
    <location>
        <position position="166"/>
    </location>
    <ligand>
        <name>UDP-N-acetyl-alpha-D-glucosamine</name>
        <dbReference type="ChEBI" id="CHEBI:57705"/>
    </ligand>
</feature>
<feature type="binding site" evidence="1">
    <location>
        <position position="181"/>
    </location>
    <ligand>
        <name>UDP-N-acetyl-alpha-D-glucosamine</name>
        <dbReference type="ChEBI" id="CHEBI:57705"/>
    </ligand>
</feature>
<feature type="binding site" evidence="1">
    <location>
        <position position="239"/>
    </location>
    <ligand>
        <name>Mg(2+)</name>
        <dbReference type="ChEBI" id="CHEBI:18420"/>
    </ligand>
</feature>
<feature type="binding site" evidence="1">
    <location>
        <position position="239"/>
    </location>
    <ligand>
        <name>UDP-N-acetyl-alpha-D-glucosamine</name>
        <dbReference type="ChEBI" id="CHEBI:57705"/>
    </ligand>
</feature>
<feature type="binding site" evidence="1">
    <location>
        <position position="344"/>
    </location>
    <ligand>
        <name>UDP-N-acetyl-alpha-D-glucosamine</name>
        <dbReference type="ChEBI" id="CHEBI:57705"/>
    </ligand>
</feature>
<feature type="binding site" evidence="1">
    <location>
        <position position="362"/>
    </location>
    <ligand>
        <name>UDP-N-acetyl-alpha-D-glucosamine</name>
        <dbReference type="ChEBI" id="CHEBI:57705"/>
    </ligand>
</feature>
<feature type="binding site" evidence="1">
    <location>
        <position position="377"/>
    </location>
    <ligand>
        <name>UDP-N-acetyl-alpha-D-glucosamine</name>
        <dbReference type="ChEBI" id="CHEBI:57705"/>
    </ligand>
</feature>
<feature type="binding site" evidence="1">
    <location>
        <position position="388"/>
    </location>
    <ligand>
        <name>UDP-N-acetyl-alpha-D-glucosamine</name>
        <dbReference type="ChEBI" id="CHEBI:57705"/>
    </ligand>
</feature>
<feature type="binding site" evidence="1">
    <location>
        <position position="391"/>
    </location>
    <ligand>
        <name>acetyl-CoA</name>
        <dbReference type="ChEBI" id="CHEBI:57288"/>
    </ligand>
</feature>
<feature type="binding site" evidence="1">
    <location>
        <begin position="397"/>
        <end position="398"/>
    </location>
    <ligand>
        <name>acetyl-CoA</name>
        <dbReference type="ChEBI" id="CHEBI:57288"/>
    </ligand>
</feature>
<feature type="binding site" evidence="1">
    <location>
        <position position="416"/>
    </location>
    <ligand>
        <name>acetyl-CoA</name>
        <dbReference type="ChEBI" id="CHEBI:57288"/>
    </ligand>
</feature>
<feature type="binding site" evidence="1">
    <location>
        <position position="434"/>
    </location>
    <ligand>
        <name>acetyl-CoA</name>
        <dbReference type="ChEBI" id="CHEBI:57288"/>
    </ligand>
</feature>
<sequence>MTFPGDTAVLVLAAGPGTRMRSDTPKVLHTLAGRSMLSHVLHAIAKLAPQRLIVVLGHDHQRIAPLVGELADTLGRTIDVALQDRPLGTGHAVLCGLSALPDDYAGNVVVTSGDTPLLDADTLADLIATHRAVSAAVTVLTTTLDDPFGYGRILRTQDHGVMAIVEQTDATPSQREIREVNAGVYAFDIAALRSALSRLSSNNAQQELYLTDVIAILRSDGQTVHASHVDDSALVAGVNNRVQLAQLASELNRRVVAAHQLAGVTVVDPATTWIDVDVTIGRDTVIHPGTQLLGRTQIGGRCVVGPDTTLTDVAVGDGASVVRTHGSSSSIGDGAAVGPFTYLRPGTALGADGKLGAFVEVKNSTIGTGTKVPHLTYVGDADIGEYSNIGASSVFVNYDGTSKRRTTVGSHVRTGSDTMFVAPVTIGDGAYTGAGTVVREDVPPGALAVSAGPQRNIENWVQRKRPGSPAAQASKRASEMACQQPTQPPDADQTP</sequence>
<reference key="1">
    <citation type="journal article" date="2003" name="Proc. Natl. Acad. Sci. U.S.A.">
        <title>The complete genome sequence of Mycobacterium bovis.</title>
        <authorList>
            <person name="Garnier T."/>
            <person name="Eiglmeier K."/>
            <person name="Camus J.-C."/>
            <person name="Medina N."/>
            <person name="Mansoor H."/>
            <person name="Pryor M."/>
            <person name="Duthoy S."/>
            <person name="Grondin S."/>
            <person name="Lacroix C."/>
            <person name="Monsempe C."/>
            <person name="Simon S."/>
            <person name="Harris B."/>
            <person name="Atkin R."/>
            <person name="Doggett J."/>
            <person name="Mayes R."/>
            <person name="Keating L."/>
            <person name="Wheeler P.R."/>
            <person name="Parkhill J."/>
            <person name="Barrell B.G."/>
            <person name="Cole S.T."/>
            <person name="Gordon S.V."/>
            <person name="Hewinson R.G."/>
        </authorList>
    </citation>
    <scope>NUCLEOTIDE SEQUENCE [LARGE SCALE GENOMIC DNA]</scope>
    <source>
        <strain>ATCC BAA-935 / AF2122/97</strain>
    </source>
</reference>
<reference key="2">
    <citation type="journal article" date="2017" name="Genome Announc.">
        <title>Updated reference genome sequence and annotation of Mycobacterium bovis AF2122/97.</title>
        <authorList>
            <person name="Malone K.M."/>
            <person name="Farrell D."/>
            <person name="Stuber T.P."/>
            <person name="Schubert O.T."/>
            <person name="Aebersold R."/>
            <person name="Robbe-Austerman S."/>
            <person name="Gordon S.V."/>
        </authorList>
    </citation>
    <scope>NUCLEOTIDE SEQUENCE [LARGE SCALE GENOMIC DNA]</scope>
    <scope>GENOME REANNOTATION</scope>
    <source>
        <strain>ATCC BAA-935 / AF2122/97</strain>
    </source>
</reference>
<accession>Q7VF00</accession>
<accession>A0A1R3XXG6</accession>
<accession>X2BGT8</accession>
<evidence type="ECO:0000255" key="1">
    <source>
        <dbReference type="HAMAP-Rule" id="MF_01631"/>
    </source>
</evidence>
<evidence type="ECO:0000256" key="2">
    <source>
        <dbReference type="SAM" id="MobiDB-lite"/>
    </source>
</evidence>
<proteinExistence type="inferred from homology"/>
<dbReference type="EC" id="2.7.7.23" evidence="1"/>
<dbReference type="EC" id="2.3.1.157" evidence="1"/>
<dbReference type="EMBL" id="LT708304">
    <property type="protein sequence ID" value="SIT99645.1"/>
    <property type="molecule type" value="Genomic_DNA"/>
</dbReference>
<dbReference type="RefSeq" id="NP_854702.1">
    <property type="nucleotide sequence ID" value="NC_002945.3"/>
</dbReference>
<dbReference type="RefSeq" id="WP_010950485.1">
    <property type="nucleotide sequence ID" value="NC_002945.4"/>
</dbReference>
<dbReference type="SMR" id="Q7VF00"/>
<dbReference type="KEGG" id="mbo:BQ2027_MB1046C"/>
<dbReference type="PATRIC" id="fig|233413.5.peg.1137"/>
<dbReference type="UniPathway" id="UPA00113">
    <property type="reaction ID" value="UER00532"/>
</dbReference>
<dbReference type="UniPathway" id="UPA00113">
    <property type="reaction ID" value="UER00533"/>
</dbReference>
<dbReference type="UniPathway" id="UPA00973"/>
<dbReference type="Proteomes" id="UP000001419">
    <property type="component" value="Chromosome"/>
</dbReference>
<dbReference type="GO" id="GO:0005737">
    <property type="term" value="C:cytoplasm"/>
    <property type="evidence" value="ECO:0007669"/>
    <property type="project" value="UniProtKB-SubCell"/>
</dbReference>
<dbReference type="GO" id="GO:0016020">
    <property type="term" value="C:membrane"/>
    <property type="evidence" value="ECO:0007669"/>
    <property type="project" value="GOC"/>
</dbReference>
<dbReference type="GO" id="GO:0019134">
    <property type="term" value="F:glucosamine-1-phosphate N-acetyltransferase activity"/>
    <property type="evidence" value="ECO:0007669"/>
    <property type="project" value="UniProtKB-UniRule"/>
</dbReference>
<dbReference type="GO" id="GO:0000287">
    <property type="term" value="F:magnesium ion binding"/>
    <property type="evidence" value="ECO:0007669"/>
    <property type="project" value="UniProtKB-UniRule"/>
</dbReference>
<dbReference type="GO" id="GO:0003977">
    <property type="term" value="F:UDP-N-acetylglucosamine diphosphorylase activity"/>
    <property type="evidence" value="ECO:0007669"/>
    <property type="project" value="UniProtKB-UniRule"/>
</dbReference>
<dbReference type="GO" id="GO:0000902">
    <property type="term" value="P:cell morphogenesis"/>
    <property type="evidence" value="ECO:0007669"/>
    <property type="project" value="UniProtKB-UniRule"/>
</dbReference>
<dbReference type="GO" id="GO:0071555">
    <property type="term" value="P:cell wall organization"/>
    <property type="evidence" value="ECO:0007669"/>
    <property type="project" value="UniProtKB-KW"/>
</dbReference>
<dbReference type="GO" id="GO:0009245">
    <property type="term" value="P:lipid A biosynthetic process"/>
    <property type="evidence" value="ECO:0007669"/>
    <property type="project" value="UniProtKB-UniRule"/>
</dbReference>
<dbReference type="GO" id="GO:0009252">
    <property type="term" value="P:peptidoglycan biosynthetic process"/>
    <property type="evidence" value="ECO:0007669"/>
    <property type="project" value="UniProtKB-UniRule"/>
</dbReference>
<dbReference type="GO" id="GO:0008360">
    <property type="term" value="P:regulation of cell shape"/>
    <property type="evidence" value="ECO:0007669"/>
    <property type="project" value="UniProtKB-KW"/>
</dbReference>
<dbReference type="GO" id="GO:0006048">
    <property type="term" value="P:UDP-N-acetylglucosamine biosynthetic process"/>
    <property type="evidence" value="ECO:0007669"/>
    <property type="project" value="UniProtKB-UniPathway"/>
</dbReference>
<dbReference type="CDD" id="cd02540">
    <property type="entry name" value="GT2_GlmU_N_bac"/>
    <property type="match status" value="1"/>
</dbReference>
<dbReference type="CDD" id="cd03353">
    <property type="entry name" value="LbH_GlmU_C"/>
    <property type="match status" value="1"/>
</dbReference>
<dbReference type="FunFam" id="2.160.10.10:FF:000028">
    <property type="entry name" value="Bifunctional protein GlmU"/>
    <property type="match status" value="1"/>
</dbReference>
<dbReference type="FunFam" id="3.90.550.10:FF:000006">
    <property type="entry name" value="Bifunctional protein GlmU"/>
    <property type="match status" value="1"/>
</dbReference>
<dbReference type="Gene3D" id="2.160.10.10">
    <property type="entry name" value="Hexapeptide repeat proteins"/>
    <property type="match status" value="1"/>
</dbReference>
<dbReference type="Gene3D" id="3.90.550.10">
    <property type="entry name" value="Spore Coat Polysaccharide Biosynthesis Protein SpsA, Chain A"/>
    <property type="match status" value="1"/>
</dbReference>
<dbReference type="HAMAP" id="MF_01631">
    <property type="entry name" value="GlmU"/>
    <property type="match status" value="1"/>
</dbReference>
<dbReference type="InterPro" id="IPR005882">
    <property type="entry name" value="Bifunctional_GlmU"/>
</dbReference>
<dbReference type="InterPro" id="IPR050065">
    <property type="entry name" value="GlmU-like"/>
</dbReference>
<dbReference type="InterPro" id="IPR038009">
    <property type="entry name" value="GlmU_C_LbH"/>
</dbReference>
<dbReference type="InterPro" id="IPR001451">
    <property type="entry name" value="Hexapep"/>
</dbReference>
<dbReference type="InterPro" id="IPR025877">
    <property type="entry name" value="MobA-like_NTP_Trfase"/>
</dbReference>
<dbReference type="InterPro" id="IPR029044">
    <property type="entry name" value="Nucleotide-diphossugar_trans"/>
</dbReference>
<dbReference type="InterPro" id="IPR011004">
    <property type="entry name" value="Trimer_LpxA-like_sf"/>
</dbReference>
<dbReference type="NCBIfam" id="TIGR01173">
    <property type="entry name" value="glmU"/>
    <property type="match status" value="1"/>
</dbReference>
<dbReference type="NCBIfam" id="NF010932">
    <property type="entry name" value="PRK14352.1"/>
    <property type="match status" value="1"/>
</dbReference>
<dbReference type="PANTHER" id="PTHR43584:SF3">
    <property type="entry name" value="BIFUNCTIONAL PROTEIN GLMU"/>
    <property type="match status" value="1"/>
</dbReference>
<dbReference type="PANTHER" id="PTHR43584">
    <property type="entry name" value="NUCLEOTIDYL TRANSFERASE"/>
    <property type="match status" value="1"/>
</dbReference>
<dbReference type="Pfam" id="PF00132">
    <property type="entry name" value="Hexapep"/>
    <property type="match status" value="1"/>
</dbReference>
<dbReference type="Pfam" id="PF12804">
    <property type="entry name" value="NTP_transf_3"/>
    <property type="match status" value="1"/>
</dbReference>
<dbReference type="SUPFAM" id="SSF53448">
    <property type="entry name" value="Nucleotide-diphospho-sugar transferases"/>
    <property type="match status" value="1"/>
</dbReference>
<dbReference type="SUPFAM" id="SSF51161">
    <property type="entry name" value="Trimeric LpxA-like enzymes"/>
    <property type="match status" value="1"/>
</dbReference>